<accession>Q17ZC7</accession>
<evidence type="ECO:0000255" key="1">
    <source>
        <dbReference type="HAMAP-Rule" id="MF_01326"/>
    </source>
</evidence>
<evidence type="ECO:0000256" key="2">
    <source>
        <dbReference type="SAM" id="MobiDB-lite"/>
    </source>
</evidence>
<evidence type="ECO:0000305" key="3"/>
<feature type="chain" id="PRO_1000142002" description="Large ribosomal subunit protein uL24">
    <location>
        <begin position="1"/>
        <end position="73"/>
    </location>
</feature>
<feature type="region of interest" description="Disordered" evidence="2">
    <location>
        <begin position="51"/>
        <end position="73"/>
    </location>
</feature>
<feature type="compositionally biased region" description="Basic and acidic residues" evidence="2">
    <location>
        <begin position="51"/>
        <end position="65"/>
    </location>
</feature>
<organism>
    <name type="scientific">Helicobacter acinonychis (strain Sheeba)</name>
    <dbReference type="NCBI Taxonomy" id="382638"/>
    <lineage>
        <taxon>Bacteria</taxon>
        <taxon>Pseudomonadati</taxon>
        <taxon>Campylobacterota</taxon>
        <taxon>Epsilonproteobacteria</taxon>
        <taxon>Campylobacterales</taxon>
        <taxon>Helicobacteraceae</taxon>
        <taxon>Helicobacter</taxon>
    </lineage>
</organism>
<name>RL24_HELAH</name>
<proteinExistence type="inferred from homology"/>
<dbReference type="EMBL" id="AM260522">
    <property type="protein sequence ID" value="CAJ98999.1"/>
    <property type="molecule type" value="Genomic_DNA"/>
</dbReference>
<dbReference type="RefSeq" id="WP_000834236.1">
    <property type="nucleotide sequence ID" value="NC_008229.1"/>
</dbReference>
<dbReference type="SMR" id="Q17ZC7"/>
<dbReference type="STRING" id="382638.Hac_0147"/>
<dbReference type="GeneID" id="31757676"/>
<dbReference type="KEGG" id="hac:Hac_0147"/>
<dbReference type="eggNOG" id="COG0198">
    <property type="taxonomic scope" value="Bacteria"/>
</dbReference>
<dbReference type="HOGENOM" id="CLU_093315_3_0_7"/>
<dbReference type="OrthoDB" id="9807419at2"/>
<dbReference type="BioCyc" id="HACI382638:HAC_RS00635-MONOMER"/>
<dbReference type="Proteomes" id="UP000000775">
    <property type="component" value="Chromosome"/>
</dbReference>
<dbReference type="GO" id="GO:1990904">
    <property type="term" value="C:ribonucleoprotein complex"/>
    <property type="evidence" value="ECO:0007669"/>
    <property type="project" value="UniProtKB-KW"/>
</dbReference>
<dbReference type="GO" id="GO:0005840">
    <property type="term" value="C:ribosome"/>
    <property type="evidence" value="ECO:0007669"/>
    <property type="project" value="UniProtKB-KW"/>
</dbReference>
<dbReference type="GO" id="GO:0019843">
    <property type="term" value="F:rRNA binding"/>
    <property type="evidence" value="ECO:0007669"/>
    <property type="project" value="UniProtKB-UniRule"/>
</dbReference>
<dbReference type="GO" id="GO:0003735">
    <property type="term" value="F:structural constituent of ribosome"/>
    <property type="evidence" value="ECO:0007669"/>
    <property type="project" value="InterPro"/>
</dbReference>
<dbReference type="GO" id="GO:0006412">
    <property type="term" value="P:translation"/>
    <property type="evidence" value="ECO:0007669"/>
    <property type="project" value="UniProtKB-UniRule"/>
</dbReference>
<dbReference type="CDD" id="cd06089">
    <property type="entry name" value="KOW_RPL26"/>
    <property type="match status" value="1"/>
</dbReference>
<dbReference type="FunFam" id="2.30.30.30:FF:000023">
    <property type="entry name" value="50S ribosomal protein L24"/>
    <property type="match status" value="1"/>
</dbReference>
<dbReference type="Gene3D" id="2.30.30.30">
    <property type="match status" value="1"/>
</dbReference>
<dbReference type="HAMAP" id="MF_01326_B">
    <property type="entry name" value="Ribosomal_uL24_B"/>
    <property type="match status" value="1"/>
</dbReference>
<dbReference type="InterPro" id="IPR005824">
    <property type="entry name" value="KOW"/>
</dbReference>
<dbReference type="InterPro" id="IPR014722">
    <property type="entry name" value="Rib_uL2_dom2"/>
</dbReference>
<dbReference type="InterPro" id="IPR003256">
    <property type="entry name" value="Ribosomal_uL24"/>
</dbReference>
<dbReference type="InterPro" id="IPR005825">
    <property type="entry name" value="Ribosomal_uL24_CS"/>
</dbReference>
<dbReference type="InterPro" id="IPR041988">
    <property type="entry name" value="Ribosomal_uL24_KOW"/>
</dbReference>
<dbReference type="InterPro" id="IPR008991">
    <property type="entry name" value="Translation_prot_SH3-like_sf"/>
</dbReference>
<dbReference type="NCBIfam" id="TIGR01079">
    <property type="entry name" value="rplX_bact"/>
    <property type="match status" value="1"/>
</dbReference>
<dbReference type="PANTHER" id="PTHR12903">
    <property type="entry name" value="MITOCHONDRIAL RIBOSOMAL PROTEIN L24"/>
    <property type="match status" value="1"/>
</dbReference>
<dbReference type="Pfam" id="PF00467">
    <property type="entry name" value="KOW"/>
    <property type="match status" value="1"/>
</dbReference>
<dbReference type="Pfam" id="PF17136">
    <property type="entry name" value="ribosomal_L24"/>
    <property type="match status" value="1"/>
</dbReference>
<dbReference type="SMART" id="SM00739">
    <property type="entry name" value="KOW"/>
    <property type="match status" value="1"/>
</dbReference>
<dbReference type="SUPFAM" id="SSF50104">
    <property type="entry name" value="Translation proteins SH3-like domain"/>
    <property type="match status" value="1"/>
</dbReference>
<dbReference type="PROSITE" id="PS01108">
    <property type="entry name" value="RIBOSOMAL_L24"/>
    <property type="match status" value="1"/>
</dbReference>
<gene>
    <name evidence="1" type="primary">rplX</name>
    <name type="ordered locus">Hac_0147</name>
</gene>
<sequence length="73" mass="7938">MKSEIKKNDMVKVIAGDDKGKVAKVLAVLPKTSQVIVEGCKVVKKAIKPTDDNPKGGFIHKEKPMHISNVKKA</sequence>
<protein>
    <recommendedName>
        <fullName evidence="1">Large ribosomal subunit protein uL24</fullName>
    </recommendedName>
    <alternativeName>
        <fullName evidence="3">50S ribosomal protein L24</fullName>
    </alternativeName>
</protein>
<reference key="1">
    <citation type="journal article" date="2006" name="PLoS Genet.">
        <title>Who ate whom? Adaptive Helicobacter genomic changes that accompanied a host jump from early humans to large felines.</title>
        <authorList>
            <person name="Eppinger M."/>
            <person name="Baar C."/>
            <person name="Linz B."/>
            <person name="Raddatz G."/>
            <person name="Lanz C."/>
            <person name="Keller H."/>
            <person name="Morelli G."/>
            <person name="Gressmann H."/>
            <person name="Achtman M."/>
            <person name="Schuster S.C."/>
        </authorList>
    </citation>
    <scope>NUCLEOTIDE SEQUENCE [LARGE SCALE GENOMIC DNA]</scope>
    <source>
        <strain>Sheeba</strain>
    </source>
</reference>
<comment type="function">
    <text evidence="1">One of two assembly initiator proteins, it binds directly to the 5'-end of the 23S rRNA, where it nucleates assembly of the 50S subunit.</text>
</comment>
<comment type="function">
    <text evidence="1">One of the proteins that surrounds the polypeptide exit tunnel on the outside of the subunit.</text>
</comment>
<comment type="subunit">
    <text evidence="1">Part of the 50S ribosomal subunit.</text>
</comment>
<comment type="similarity">
    <text evidence="1">Belongs to the universal ribosomal protein uL24 family.</text>
</comment>
<keyword id="KW-0687">Ribonucleoprotein</keyword>
<keyword id="KW-0689">Ribosomal protein</keyword>
<keyword id="KW-0694">RNA-binding</keyword>
<keyword id="KW-0699">rRNA-binding</keyword>